<sequence length="312" mass="33898">MNILTDPNKLKTSGCADVNASKCAEGDGEGSVQVQLDPNLNIGTAKVFSIYGKGGIGKSTTSSNLSVAFSKLGKRVLQIGCDPKHDSTFTLTKKLMPTVIDVLESVNFHSEEVRPEDFVFEGYNGVMCVEAGGPPAGTGCGGYVVGQTVKLLKEHHLLEDTDVVIFDVLGDVVCGGFASPLQHSERAMIVAANDFDSIFAANRIAAAIQAKSKNYAVRLAGVIANRSRETDQIDKFGERTGIKRVAHLPDLDVIRKSRLKKMTLFEMDHTPEIEAVQNEYLRLATELWEAKEPPVQGKPLKDRDIFDLLGFD</sequence>
<protein>
    <recommendedName>
        <fullName evidence="1">Light-independent protochlorophyllide reductase iron-sulfur ATP-binding protein</fullName>
        <shortName evidence="1">DPOR subunit L</shortName>
        <shortName evidence="1">LI-POR subunit L</shortName>
        <ecNumber evidence="1">1.3.7.7</ecNumber>
    </recommendedName>
</protein>
<accession>Q6N9K0</accession>
<name>BCHL_RHOPA</name>
<gene>
    <name evidence="1" type="primary">bchL</name>
    <name type="ordered locus">RPA1545</name>
</gene>
<keyword id="KW-0004">4Fe-4S</keyword>
<keyword id="KW-0067">ATP-binding</keyword>
<keyword id="KW-0077">Bacteriochlorophyll biosynthesis</keyword>
<keyword id="KW-0149">Chlorophyll biosynthesis</keyword>
<keyword id="KW-0408">Iron</keyword>
<keyword id="KW-0411">Iron-sulfur</keyword>
<keyword id="KW-0460">Magnesium</keyword>
<keyword id="KW-0479">Metal-binding</keyword>
<keyword id="KW-0547">Nucleotide-binding</keyword>
<keyword id="KW-0560">Oxidoreductase</keyword>
<keyword id="KW-0602">Photosynthesis</keyword>
<evidence type="ECO:0000255" key="1">
    <source>
        <dbReference type="HAMAP-Rule" id="MF_00355"/>
    </source>
</evidence>
<dbReference type="EC" id="1.3.7.7" evidence="1"/>
<dbReference type="EMBL" id="BX572597">
    <property type="protein sequence ID" value="CAE26986.1"/>
    <property type="molecule type" value="Genomic_DNA"/>
</dbReference>
<dbReference type="RefSeq" id="WP_011157104.1">
    <property type="nucleotide sequence ID" value="NZ_CP116810.1"/>
</dbReference>
<dbReference type="SMR" id="Q6N9K0"/>
<dbReference type="STRING" id="258594.RPA1545"/>
<dbReference type="GeneID" id="66892575"/>
<dbReference type="eggNOG" id="COG1348">
    <property type="taxonomic scope" value="Bacteria"/>
</dbReference>
<dbReference type="HOGENOM" id="CLU_059373_2_0_5"/>
<dbReference type="PhylomeDB" id="Q6N9K0"/>
<dbReference type="UniPathway" id="UPA00671"/>
<dbReference type="GO" id="GO:0051539">
    <property type="term" value="F:4 iron, 4 sulfur cluster binding"/>
    <property type="evidence" value="ECO:0007669"/>
    <property type="project" value="UniProtKB-UniRule"/>
</dbReference>
<dbReference type="GO" id="GO:0005524">
    <property type="term" value="F:ATP binding"/>
    <property type="evidence" value="ECO:0007669"/>
    <property type="project" value="UniProtKB-UniRule"/>
</dbReference>
<dbReference type="GO" id="GO:0046872">
    <property type="term" value="F:metal ion binding"/>
    <property type="evidence" value="ECO:0007669"/>
    <property type="project" value="UniProtKB-KW"/>
</dbReference>
<dbReference type="GO" id="GO:0016730">
    <property type="term" value="F:oxidoreductase activity, acting on iron-sulfur proteins as donors"/>
    <property type="evidence" value="ECO:0007669"/>
    <property type="project" value="InterPro"/>
</dbReference>
<dbReference type="GO" id="GO:0016636">
    <property type="term" value="F:oxidoreductase activity, acting on the CH-CH group of donors, iron-sulfur protein as acceptor"/>
    <property type="evidence" value="ECO:0007669"/>
    <property type="project" value="UniProtKB-UniRule"/>
</dbReference>
<dbReference type="GO" id="GO:0036070">
    <property type="term" value="P:light-independent bacteriochlorophyll biosynthetic process"/>
    <property type="evidence" value="ECO:0007669"/>
    <property type="project" value="UniProtKB-UniRule"/>
</dbReference>
<dbReference type="GO" id="GO:0019685">
    <property type="term" value="P:photosynthesis, dark reaction"/>
    <property type="evidence" value="ECO:0007669"/>
    <property type="project" value="InterPro"/>
</dbReference>
<dbReference type="CDD" id="cd02032">
    <property type="entry name" value="Bchl-like"/>
    <property type="match status" value="1"/>
</dbReference>
<dbReference type="Gene3D" id="3.40.50.300">
    <property type="entry name" value="P-loop containing nucleotide triphosphate hydrolases"/>
    <property type="match status" value="1"/>
</dbReference>
<dbReference type="HAMAP" id="MF_00355">
    <property type="entry name" value="ChlL_BchL"/>
    <property type="match status" value="1"/>
</dbReference>
<dbReference type="InterPro" id="IPR030655">
    <property type="entry name" value="NifH/chlL_CS"/>
</dbReference>
<dbReference type="InterPro" id="IPR000392">
    <property type="entry name" value="NifH/frxC"/>
</dbReference>
<dbReference type="InterPro" id="IPR027417">
    <property type="entry name" value="P-loop_NTPase"/>
</dbReference>
<dbReference type="InterPro" id="IPR005971">
    <property type="entry name" value="Protochlorophyllide_ATP-bd"/>
</dbReference>
<dbReference type="NCBIfam" id="TIGR01281">
    <property type="entry name" value="DPOR_bchL"/>
    <property type="match status" value="1"/>
</dbReference>
<dbReference type="PANTHER" id="PTHR42864">
    <property type="entry name" value="LIGHT-INDEPENDENT PROTOCHLOROPHYLLIDE REDUCTASE IRON-SULFUR ATP-BINDING PROTEIN"/>
    <property type="match status" value="1"/>
</dbReference>
<dbReference type="PANTHER" id="PTHR42864:SF2">
    <property type="entry name" value="LIGHT-INDEPENDENT PROTOCHLOROPHYLLIDE REDUCTASE IRON-SULFUR ATP-BINDING PROTEIN"/>
    <property type="match status" value="1"/>
</dbReference>
<dbReference type="Pfam" id="PF00142">
    <property type="entry name" value="Fer4_NifH"/>
    <property type="match status" value="1"/>
</dbReference>
<dbReference type="PIRSF" id="PIRSF000363">
    <property type="entry name" value="Nitrogenase_iron"/>
    <property type="match status" value="1"/>
</dbReference>
<dbReference type="PRINTS" id="PR00091">
    <property type="entry name" value="NITROGNASEII"/>
</dbReference>
<dbReference type="SUPFAM" id="SSF52540">
    <property type="entry name" value="P-loop containing nucleoside triphosphate hydrolases"/>
    <property type="match status" value="1"/>
</dbReference>
<dbReference type="PROSITE" id="PS00746">
    <property type="entry name" value="NIFH_FRXC_1"/>
    <property type="match status" value="1"/>
</dbReference>
<dbReference type="PROSITE" id="PS00692">
    <property type="entry name" value="NIFH_FRXC_2"/>
    <property type="match status" value="1"/>
</dbReference>
<dbReference type="PROSITE" id="PS51026">
    <property type="entry name" value="NIFH_FRXC_3"/>
    <property type="match status" value="1"/>
</dbReference>
<proteinExistence type="inferred from homology"/>
<comment type="function">
    <text evidence="1">Component of the dark-operative protochlorophyllide reductase (DPOR) that uses Mg-ATP and reduced ferredoxin to reduce ring D of protochlorophyllide (Pchlide) to form chlorophyllide a (Chlide). This reaction is light-independent. The L component serves as a unique electron donor to the NB-component of the complex, and binds Mg-ATP.</text>
</comment>
<comment type="catalytic activity">
    <reaction evidence="1">
        <text>chlorophyllide a + oxidized 2[4Fe-4S]-[ferredoxin] + 2 ADP + 2 phosphate = protochlorophyllide a + reduced 2[4Fe-4S]-[ferredoxin] + 2 ATP + 2 H2O</text>
        <dbReference type="Rhea" id="RHEA:28202"/>
        <dbReference type="Rhea" id="RHEA-COMP:10002"/>
        <dbReference type="Rhea" id="RHEA-COMP:10004"/>
        <dbReference type="ChEBI" id="CHEBI:15377"/>
        <dbReference type="ChEBI" id="CHEBI:30616"/>
        <dbReference type="ChEBI" id="CHEBI:33722"/>
        <dbReference type="ChEBI" id="CHEBI:33723"/>
        <dbReference type="ChEBI" id="CHEBI:43474"/>
        <dbReference type="ChEBI" id="CHEBI:83348"/>
        <dbReference type="ChEBI" id="CHEBI:83350"/>
        <dbReference type="ChEBI" id="CHEBI:456216"/>
        <dbReference type="EC" id="1.3.7.7"/>
    </reaction>
</comment>
<comment type="cofactor">
    <cofactor evidence="1">
        <name>[4Fe-4S] cluster</name>
        <dbReference type="ChEBI" id="CHEBI:49883"/>
    </cofactor>
    <text evidence="1">Binds 1 [4Fe-4S] cluster per dimer.</text>
</comment>
<comment type="pathway">
    <text evidence="1">Porphyrin-containing compound metabolism; bacteriochlorophyll biosynthesis (light-independent).</text>
</comment>
<comment type="subunit">
    <text evidence="1">Homodimer. Protochlorophyllide reductase is composed of three subunits; BchL, BchN and BchB.</text>
</comment>
<comment type="similarity">
    <text evidence="1">Belongs to the NifH/BchL/ChlL family.</text>
</comment>
<reference key="1">
    <citation type="journal article" date="2004" name="Nat. Biotechnol.">
        <title>Complete genome sequence of the metabolically versatile photosynthetic bacterium Rhodopseudomonas palustris.</title>
        <authorList>
            <person name="Larimer F.W."/>
            <person name="Chain P."/>
            <person name="Hauser L."/>
            <person name="Lamerdin J.E."/>
            <person name="Malfatti S."/>
            <person name="Do L."/>
            <person name="Land M.L."/>
            <person name="Pelletier D.A."/>
            <person name="Beatty J.T."/>
            <person name="Lang A.S."/>
            <person name="Tabita F.R."/>
            <person name="Gibson J.L."/>
            <person name="Hanson T.E."/>
            <person name="Bobst C."/>
            <person name="Torres y Torres J.L."/>
            <person name="Peres C."/>
            <person name="Harrison F.H."/>
            <person name="Gibson J."/>
            <person name="Harwood C.S."/>
        </authorList>
    </citation>
    <scope>NUCLEOTIDE SEQUENCE [LARGE SCALE GENOMIC DNA]</scope>
    <source>
        <strain>ATCC BAA-98 / CGA009</strain>
    </source>
</reference>
<organism>
    <name type="scientific">Rhodopseudomonas palustris (strain ATCC BAA-98 / CGA009)</name>
    <dbReference type="NCBI Taxonomy" id="258594"/>
    <lineage>
        <taxon>Bacteria</taxon>
        <taxon>Pseudomonadati</taxon>
        <taxon>Pseudomonadota</taxon>
        <taxon>Alphaproteobacteria</taxon>
        <taxon>Hyphomicrobiales</taxon>
        <taxon>Nitrobacteraceae</taxon>
        <taxon>Rhodopseudomonas</taxon>
    </lineage>
</organism>
<feature type="chain" id="PRO_0000324068" description="Light-independent protochlorophyllide reductase iron-sulfur ATP-binding protein">
    <location>
        <begin position="1"/>
        <end position="312"/>
    </location>
</feature>
<feature type="binding site" evidence="1">
    <location>
        <begin position="55"/>
        <end position="60"/>
    </location>
    <ligand>
        <name>ATP</name>
        <dbReference type="ChEBI" id="CHEBI:30616"/>
    </ligand>
</feature>
<feature type="binding site" evidence="1">
    <location>
        <position position="59"/>
    </location>
    <ligand>
        <name>Mg(2+)</name>
        <dbReference type="ChEBI" id="CHEBI:18420"/>
    </ligand>
</feature>
<feature type="binding site" evidence="1">
    <location>
        <position position="84"/>
    </location>
    <ligand>
        <name>ATP</name>
        <dbReference type="ChEBI" id="CHEBI:30616"/>
    </ligand>
</feature>
<feature type="binding site" evidence="1">
    <location>
        <position position="140"/>
    </location>
    <ligand>
        <name>[4Fe-4S] cluster</name>
        <dbReference type="ChEBI" id="CHEBI:49883"/>
        <note>ligand shared between dimeric partners</note>
    </ligand>
</feature>
<feature type="binding site" evidence="1">
    <location>
        <position position="174"/>
    </location>
    <ligand>
        <name>[4Fe-4S] cluster</name>
        <dbReference type="ChEBI" id="CHEBI:49883"/>
        <note>ligand shared between dimeric partners</note>
    </ligand>
</feature>
<feature type="binding site" evidence="1">
    <location>
        <begin position="225"/>
        <end position="226"/>
    </location>
    <ligand>
        <name>ATP</name>
        <dbReference type="ChEBI" id="CHEBI:30616"/>
    </ligand>
</feature>
<feature type="binding site" evidence="1">
    <location>
        <begin position="249"/>
        <end position="251"/>
    </location>
    <ligand>
        <name>ATP</name>
        <dbReference type="ChEBI" id="CHEBI:30616"/>
    </ligand>
</feature>